<protein>
    <recommendedName>
        <fullName evidence="1">Cytidylate kinase</fullName>
        <shortName evidence="1">CK</shortName>
        <ecNumber evidence="1">2.7.4.25</ecNumber>
    </recommendedName>
    <alternativeName>
        <fullName evidence="1">Cytidine monophosphate kinase</fullName>
        <shortName evidence="1">CMP kinase</shortName>
    </alternativeName>
</protein>
<proteinExistence type="inferred from homology"/>
<gene>
    <name evidence="1" type="primary">cmk</name>
    <name type="ordered locus">RB10510</name>
</gene>
<dbReference type="EC" id="2.7.4.25" evidence="1"/>
<dbReference type="EMBL" id="BX294151">
    <property type="protein sequence ID" value="CAD78918.1"/>
    <property type="molecule type" value="Genomic_DNA"/>
</dbReference>
<dbReference type="RefSeq" id="NP_869461.1">
    <property type="nucleotide sequence ID" value="NC_005027.1"/>
</dbReference>
<dbReference type="RefSeq" id="WP_011122796.1">
    <property type="nucleotide sequence ID" value="NC_005027.1"/>
</dbReference>
<dbReference type="SMR" id="Q7UEW6"/>
<dbReference type="FunCoup" id="Q7UEW6">
    <property type="interactions" value="320"/>
</dbReference>
<dbReference type="STRING" id="243090.RB10510"/>
<dbReference type="EnsemblBacteria" id="CAD78918">
    <property type="protein sequence ID" value="CAD78918"/>
    <property type="gene ID" value="RB10510"/>
</dbReference>
<dbReference type="KEGG" id="rba:RB10510"/>
<dbReference type="PATRIC" id="fig|243090.15.peg.5078"/>
<dbReference type="eggNOG" id="COG0283">
    <property type="taxonomic scope" value="Bacteria"/>
</dbReference>
<dbReference type="HOGENOM" id="CLU_079959_2_0_0"/>
<dbReference type="InParanoid" id="Q7UEW6"/>
<dbReference type="OrthoDB" id="9807434at2"/>
<dbReference type="Proteomes" id="UP000001025">
    <property type="component" value="Chromosome"/>
</dbReference>
<dbReference type="GO" id="GO:0005829">
    <property type="term" value="C:cytosol"/>
    <property type="evidence" value="ECO:0000318"/>
    <property type="project" value="GO_Central"/>
</dbReference>
<dbReference type="GO" id="GO:0004127">
    <property type="term" value="F:(d)CMP kinase activity"/>
    <property type="evidence" value="ECO:0000318"/>
    <property type="project" value="GO_Central"/>
</dbReference>
<dbReference type="GO" id="GO:0005524">
    <property type="term" value="F:ATP binding"/>
    <property type="evidence" value="ECO:0007669"/>
    <property type="project" value="UniProtKB-UniRule"/>
</dbReference>
<dbReference type="GO" id="GO:0036430">
    <property type="term" value="F:CMP kinase activity"/>
    <property type="evidence" value="ECO:0007669"/>
    <property type="project" value="RHEA"/>
</dbReference>
<dbReference type="GO" id="GO:0036431">
    <property type="term" value="F:dCMP kinase activity"/>
    <property type="evidence" value="ECO:0007669"/>
    <property type="project" value="RHEA"/>
</dbReference>
<dbReference type="GO" id="GO:0015949">
    <property type="term" value="P:nucleobase-containing small molecule interconversion"/>
    <property type="evidence" value="ECO:0000318"/>
    <property type="project" value="GO_Central"/>
</dbReference>
<dbReference type="GO" id="GO:0006220">
    <property type="term" value="P:pyrimidine nucleotide metabolic process"/>
    <property type="evidence" value="ECO:0007669"/>
    <property type="project" value="UniProtKB-UniRule"/>
</dbReference>
<dbReference type="CDD" id="cd02020">
    <property type="entry name" value="CMPK"/>
    <property type="match status" value="1"/>
</dbReference>
<dbReference type="FunFam" id="3.40.50.300:FF:005175">
    <property type="entry name" value="Cytidylate kinase"/>
    <property type="match status" value="1"/>
</dbReference>
<dbReference type="Gene3D" id="3.40.50.300">
    <property type="entry name" value="P-loop containing nucleotide triphosphate hydrolases"/>
    <property type="match status" value="1"/>
</dbReference>
<dbReference type="HAMAP" id="MF_00238">
    <property type="entry name" value="Cytidyl_kinase_type1"/>
    <property type="match status" value="1"/>
</dbReference>
<dbReference type="InterPro" id="IPR003136">
    <property type="entry name" value="Cytidylate_kin"/>
</dbReference>
<dbReference type="InterPro" id="IPR011994">
    <property type="entry name" value="Cytidylate_kinase_dom"/>
</dbReference>
<dbReference type="InterPro" id="IPR027417">
    <property type="entry name" value="P-loop_NTPase"/>
</dbReference>
<dbReference type="NCBIfam" id="TIGR00017">
    <property type="entry name" value="cmk"/>
    <property type="match status" value="1"/>
</dbReference>
<dbReference type="PANTHER" id="PTHR21299:SF2">
    <property type="entry name" value="CYTIDYLATE KINASE"/>
    <property type="match status" value="1"/>
</dbReference>
<dbReference type="PANTHER" id="PTHR21299">
    <property type="entry name" value="CYTIDYLATE KINASE/PANTOATE-BETA-ALANINE LIGASE"/>
    <property type="match status" value="1"/>
</dbReference>
<dbReference type="Pfam" id="PF02224">
    <property type="entry name" value="Cytidylate_kin"/>
    <property type="match status" value="1"/>
</dbReference>
<dbReference type="SUPFAM" id="SSF52540">
    <property type="entry name" value="P-loop containing nucleoside triphosphate hydrolases"/>
    <property type="match status" value="1"/>
</dbReference>
<evidence type="ECO:0000255" key="1">
    <source>
        <dbReference type="HAMAP-Rule" id="MF_00238"/>
    </source>
</evidence>
<sequence>MIITIDGPAGAGKSSIARRVASELGFEFLDTGAMYRAVTWGVMQQGIAWDDVESLVEFADAAQLIWQDDRIYLDNQDISEEIRTPQVTSHIRYLADPPRIRERITAQQRRIATGRDIVTEGRDQGTEVFPDAHCKIFLTASPEERARRRQRQLAENGRVMSVEEILAAQNQRDLEDRMRPVGRLRAASDAIVVQTDGMSPDEVREEVLRLVRECVQASAANSASSDVTR</sequence>
<feature type="chain" id="PRO_0000131962" description="Cytidylate kinase">
    <location>
        <begin position="1"/>
        <end position="229"/>
    </location>
</feature>
<feature type="binding site" evidence="1">
    <location>
        <begin position="7"/>
        <end position="15"/>
    </location>
    <ligand>
        <name>ATP</name>
        <dbReference type="ChEBI" id="CHEBI:30616"/>
    </ligand>
</feature>
<organism>
    <name type="scientific">Rhodopirellula baltica (strain DSM 10527 / NCIMB 13988 / SH1)</name>
    <dbReference type="NCBI Taxonomy" id="243090"/>
    <lineage>
        <taxon>Bacteria</taxon>
        <taxon>Pseudomonadati</taxon>
        <taxon>Planctomycetota</taxon>
        <taxon>Planctomycetia</taxon>
        <taxon>Pirellulales</taxon>
        <taxon>Pirellulaceae</taxon>
        <taxon>Rhodopirellula</taxon>
    </lineage>
</organism>
<name>KCY_RHOBA</name>
<keyword id="KW-0067">ATP-binding</keyword>
<keyword id="KW-0963">Cytoplasm</keyword>
<keyword id="KW-0418">Kinase</keyword>
<keyword id="KW-0547">Nucleotide-binding</keyword>
<keyword id="KW-1185">Reference proteome</keyword>
<keyword id="KW-0808">Transferase</keyword>
<comment type="catalytic activity">
    <reaction evidence="1">
        <text>CMP + ATP = CDP + ADP</text>
        <dbReference type="Rhea" id="RHEA:11600"/>
        <dbReference type="ChEBI" id="CHEBI:30616"/>
        <dbReference type="ChEBI" id="CHEBI:58069"/>
        <dbReference type="ChEBI" id="CHEBI:60377"/>
        <dbReference type="ChEBI" id="CHEBI:456216"/>
        <dbReference type="EC" id="2.7.4.25"/>
    </reaction>
</comment>
<comment type="catalytic activity">
    <reaction evidence="1">
        <text>dCMP + ATP = dCDP + ADP</text>
        <dbReference type="Rhea" id="RHEA:25094"/>
        <dbReference type="ChEBI" id="CHEBI:30616"/>
        <dbReference type="ChEBI" id="CHEBI:57566"/>
        <dbReference type="ChEBI" id="CHEBI:58593"/>
        <dbReference type="ChEBI" id="CHEBI:456216"/>
        <dbReference type="EC" id="2.7.4.25"/>
    </reaction>
</comment>
<comment type="subcellular location">
    <subcellularLocation>
        <location evidence="1">Cytoplasm</location>
    </subcellularLocation>
</comment>
<comment type="similarity">
    <text evidence="1">Belongs to the cytidylate kinase family. Type 1 subfamily.</text>
</comment>
<reference key="1">
    <citation type="journal article" date="2003" name="Proc. Natl. Acad. Sci. U.S.A.">
        <title>Complete genome sequence of the marine planctomycete Pirellula sp. strain 1.</title>
        <authorList>
            <person name="Gloeckner F.O."/>
            <person name="Kube M."/>
            <person name="Bauer M."/>
            <person name="Teeling H."/>
            <person name="Lombardot T."/>
            <person name="Ludwig W."/>
            <person name="Gade D."/>
            <person name="Beck A."/>
            <person name="Borzym K."/>
            <person name="Heitmann K."/>
            <person name="Rabus R."/>
            <person name="Schlesner H."/>
            <person name="Amann R."/>
            <person name="Reinhardt R."/>
        </authorList>
    </citation>
    <scope>NUCLEOTIDE SEQUENCE [LARGE SCALE GENOMIC DNA]</scope>
    <source>
        <strain>DSM 10527 / NCIMB 13988 / SH1</strain>
    </source>
</reference>
<accession>Q7UEW6</accession>